<feature type="initiator methionine" description="Removed" evidence="2">
    <location>
        <position position="1"/>
    </location>
</feature>
<feature type="chain" id="PRO_0000073769" description="Neuron-specific calcium-binding protein hippocalcin">
    <location>
        <begin position="2"/>
        <end position="193"/>
    </location>
</feature>
<feature type="domain" description="EF-hand 1" evidence="4">
    <location>
        <begin position="24"/>
        <end position="59"/>
    </location>
</feature>
<feature type="domain" description="EF-hand 2" evidence="3">
    <location>
        <begin position="60"/>
        <end position="95"/>
    </location>
</feature>
<feature type="domain" description="EF-hand 3" evidence="3">
    <location>
        <begin position="96"/>
        <end position="131"/>
    </location>
</feature>
<feature type="domain" description="EF-hand 4" evidence="3">
    <location>
        <begin position="144"/>
        <end position="179"/>
    </location>
</feature>
<feature type="binding site" evidence="3">
    <location>
        <position position="73"/>
    </location>
    <ligand>
        <name>Ca(2+)</name>
        <dbReference type="ChEBI" id="CHEBI:29108"/>
        <label>1</label>
    </ligand>
</feature>
<feature type="binding site" evidence="3">
    <location>
        <position position="75"/>
    </location>
    <ligand>
        <name>Ca(2+)</name>
        <dbReference type="ChEBI" id="CHEBI:29108"/>
        <label>1</label>
    </ligand>
</feature>
<feature type="binding site" evidence="3">
    <location>
        <position position="77"/>
    </location>
    <ligand>
        <name>Ca(2+)</name>
        <dbReference type="ChEBI" id="CHEBI:29108"/>
        <label>1</label>
    </ligand>
</feature>
<feature type="binding site" evidence="3">
    <location>
        <position position="79"/>
    </location>
    <ligand>
        <name>Ca(2+)</name>
        <dbReference type="ChEBI" id="CHEBI:29108"/>
        <label>1</label>
    </ligand>
</feature>
<feature type="binding site" evidence="3">
    <location>
        <position position="84"/>
    </location>
    <ligand>
        <name>Ca(2+)</name>
        <dbReference type="ChEBI" id="CHEBI:29108"/>
        <label>1</label>
    </ligand>
</feature>
<feature type="binding site" evidence="3">
    <location>
        <position position="109"/>
    </location>
    <ligand>
        <name>Ca(2+)</name>
        <dbReference type="ChEBI" id="CHEBI:29108"/>
        <label>2</label>
    </ligand>
</feature>
<feature type="binding site" evidence="3">
    <location>
        <position position="111"/>
    </location>
    <ligand>
        <name>Ca(2+)</name>
        <dbReference type="ChEBI" id="CHEBI:29108"/>
        <label>2</label>
    </ligand>
</feature>
<feature type="binding site" evidence="3">
    <location>
        <position position="113"/>
    </location>
    <ligand>
        <name>Ca(2+)</name>
        <dbReference type="ChEBI" id="CHEBI:29108"/>
        <label>2</label>
    </ligand>
</feature>
<feature type="binding site" evidence="3">
    <location>
        <position position="115"/>
    </location>
    <ligand>
        <name>Ca(2+)</name>
        <dbReference type="ChEBI" id="CHEBI:29108"/>
        <label>2</label>
    </ligand>
</feature>
<feature type="binding site" evidence="3">
    <location>
        <position position="120"/>
    </location>
    <ligand>
        <name>Ca(2+)</name>
        <dbReference type="ChEBI" id="CHEBI:29108"/>
        <label>2</label>
    </ligand>
</feature>
<feature type="binding site" evidence="3">
    <location>
        <position position="157"/>
    </location>
    <ligand>
        <name>Ca(2+)</name>
        <dbReference type="ChEBI" id="CHEBI:29108"/>
        <label>3</label>
    </ligand>
</feature>
<feature type="binding site" evidence="3">
    <location>
        <position position="159"/>
    </location>
    <ligand>
        <name>Ca(2+)</name>
        <dbReference type="ChEBI" id="CHEBI:29108"/>
        <label>3</label>
    </ligand>
</feature>
<feature type="binding site" evidence="3">
    <location>
        <position position="161"/>
    </location>
    <ligand>
        <name>Ca(2+)</name>
        <dbReference type="ChEBI" id="CHEBI:29108"/>
        <label>3</label>
    </ligand>
</feature>
<feature type="binding site" evidence="3">
    <location>
        <position position="163"/>
    </location>
    <ligand>
        <name>Ca(2+)</name>
        <dbReference type="ChEBI" id="CHEBI:29108"/>
        <label>3</label>
    </ligand>
</feature>
<feature type="binding site" evidence="3">
    <location>
        <position position="168"/>
    </location>
    <ligand>
        <name>Ca(2+)</name>
        <dbReference type="ChEBI" id="CHEBI:29108"/>
        <label>3</label>
    </ligand>
</feature>
<feature type="lipid moiety-binding region" description="N-myristoyl glycine" evidence="2">
    <location>
        <position position="2"/>
    </location>
</feature>
<name>HPCA_MOUSE</name>
<keyword id="KW-0106">Calcium</keyword>
<keyword id="KW-0963">Cytoplasm</keyword>
<keyword id="KW-0449">Lipoprotein</keyword>
<keyword id="KW-0472">Membrane</keyword>
<keyword id="KW-0479">Metal-binding</keyword>
<keyword id="KW-0519">Myristate</keyword>
<keyword id="KW-1185">Reference proteome</keyword>
<keyword id="KW-0677">Repeat</keyword>
<gene>
    <name evidence="5" type="primary">Hpca</name>
</gene>
<comment type="function">
    <text evidence="1 2">Calcium-binding protein that may play a role in the regulation of voltage-dependent calcium channels. May also play a role in cyclic-nucleotide-mediated signaling through the regulation of adenylate and guanylate cyclases.</text>
</comment>
<comment type="subunit">
    <text evidence="1">Oligomer; oligomerization is calcium-dependent. May interact with the voltage-dependent P/Q- and N-type calcium channels CACNA1A and CACNA1B.</text>
</comment>
<comment type="interaction">
    <interactant intactId="EBI-2128343">
        <id>P84075</id>
    </interactant>
    <interactant intactId="EBI-1633915">
        <id>Q08460</id>
        <label>Kcnma1</label>
    </interactant>
    <organismsDiffer>false</organismsDiffer>
    <experiments>3</experiments>
</comment>
<comment type="subcellular location">
    <subcellularLocation>
        <location evidence="1 2">Cytoplasm</location>
        <location evidence="1 2">Cytosol</location>
    </subcellularLocation>
    <subcellularLocation>
        <location evidence="2">Membrane</location>
        <topology evidence="2">Peripheral membrane protein</topology>
    </subcellularLocation>
    <text evidence="1 2">Association with membranes is calcium-dependent (By similarity). Enriched in the perinuclear region, probably at the trans Golgi network in response to calcium (By similarity).</text>
</comment>
<comment type="domain">
    <text evidence="1">Binds 3 calcium via EF-hand domains. The cryptic EF-hand 1 does not bind calcium.</text>
</comment>
<comment type="PTM">
    <text evidence="2">Myristoylation facilitates association with membranes.</text>
</comment>
<comment type="similarity">
    <text evidence="4">Belongs to the recoverin family.</text>
</comment>
<organism>
    <name type="scientific">Mus musculus</name>
    <name type="common">Mouse</name>
    <dbReference type="NCBI Taxonomy" id="10090"/>
    <lineage>
        <taxon>Eukaryota</taxon>
        <taxon>Metazoa</taxon>
        <taxon>Chordata</taxon>
        <taxon>Craniata</taxon>
        <taxon>Vertebrata</taxon>
        <taxon>Euteleostomi</taxon>
        <taxon>Mammalia</taxon>
        <taxon>Eutheria</taxon>
        <taxon>Euarchontoglires</taxon>
        <taxon>Glires</taxon>
        <taxon>Rodentia</taxon>
        <taxon>Myomorpha</taxon>
        <taxon>Muroidea</taxon>
        <taxon>Muridae</taxon>
        <taxon>Murinae</taxon>
        <taxon>Mus</taxon>
        <taxon>Mus</taxon>
    </lineage>
</organism>
<evidence type="ECO:0000250" key="1">
    <source>
        <dbReference type="UniProtKB" id="P84074"/>
    </source>
</evidence>
<evidence type="ECO:0000250" key="2">
    <source>
        <dbReference type="UniProtKB" id="P84076"/>
    </source>
</evidence>
<evidence type="ECO:0000255" key="3">
    <source>
        <dbReference type="PROSITE-ProRule" id="PRU00448"/>
    </source>
</evidence>
<evidence type="ECO:0000305" key="4"/>
<evidence type="ECO:0000312" key="5">
    <source>
        <dbReference type="MGI" id="MGI:1336200"/>
    </source>
</evidence>
<protein>
    <recommendedName>
        <fullName evidence="4">Neuron-specific calcium-binding protein hippocalcin</fullName>
    </recommendedName>
</protein>
<proteinExistence type="evidence at protein level"/>
<dbReference type="EMBL" id="AB015200">
    <property type="protein sequence ID" value="BAA74455.1"/>
    <property type="molecule type" value="Genomic_DNA"/>
</dbReference>
<dbReference type="EMBL" id="AF326551">
    <property type="protein sequence ID" value="AAL37397.1"/>
    <property type="molecule type" value="mRNA"/>
</dbReference>
<dbReference type="EMBL" id="AF326552">
    <property type="protein sequence ID" value="AAL37398.1"/>
    <property type="molecule type" value="mRNA"/>
</dbReference>
<dbReference type="EMBL" id="AK002992">
    <property type="protein sequence ID" value="BAB22502.1"/>
    <property type="molecule type" value="mRNA"/>
</dbReference>
<dbReference type="EMBL" id="AL606977">
    <property type="status" value="NOT_ANNOTATED_CDS"/>
    <property type="molecule type" value="Genomic_DNA"/>
</dbReference>
<dbReference type="EMBL" id="BC049607">
    <property type="protein sequence ID" value="AAH49607.1"/>
    <property type="molecule type" value="mRNA"/>
</dbReference>
<dbReference type="EMBL" id="BC058588">
    <property type="protein sequence ID" value="AAH58588.1"/>
    <property type="molecule type" value="mRNA"/>
</dbReference>
<dbReference type="CCDS" id="CCDS18682.1"/>
<dbReference type="RefSeq" id="NP_001123891.1">
    <property type="nucleotide sequence ID" value="NM_001130419.3"/>
</dbReference>
<dbReference type="RefSeq" id="NP_001273010.1">
    <property type="nucleotide sequence ID" value="NM_001286081.2"/>
</dbReference>
<dbReference type="RefSeq" id="NP_001273012.1">
    <property type="nucleotide sequence ID" value="NM_001286083.2"/>
</dbReference>
<dbReference type="RefSeq" id="NP_001408017.1">
    <property type="nucleotide sequence ID" value="NM_001421088.1"/>
</dbReference>
<dbReference type="RefSeq" id="NP_001408018.1">
    <property type="nucleotide sequence ID" value="NM_001421089.1"/>
</dbReference>
<dbReference type="RefSeq" id="NP_001408019.1">
    <property type="nucleotide sequence ID" value="NM_001421090.1"/>
</dbReference>
<dbReference type="RefSeq" id="NP_001408021.1">
    <property type="nucleotide sequence ID" value="NM_001421092.1"/>
</dbReference>
<dbReference type="RefSeq" id="NP_034601.1">
    <property type="nucleotide sequence ID" value="NM_010471.5"/>
</dbReference>
<dbReference type="RefSeq" id="XP_006502838.1">
    <property type="nucleotide sequence ID" value="XM_006502775.4"/>
</dbReference>
<dbReference type="RefSeq" id="XP_006502839.1">
    <property type="nucleotide sequence ID" value="XM_006502776.3"/>
</dbReference>
<dbReference type="RefSeq" id="XP_006502840.1">
    <property type="nucleotide sequence ID" value="XM_006502777.1"/>
</dbReference>
<dbReference type="RefSeq" id="XP_011238748.1">
    <property type="nucleotide sequence ID" value="XM_011240446.2"/>
</dbReference>
<dbReference type="RefSeq" id="XP_030109084.1">
    <property type="nucleotide sequence ID" value="XM_030253224.1"/>
</dbReference>
<dbReference type="RefSeq" id="XP_030109085.1">
    <property type="nucleotide sequence ID" value="XM_030253225.1"/>
</dbReference>
<dbReference type="SMR" id="P84075"/>
<dbReference type="BioGRID" id="200404">
    <property type="interactions" value="4"/>
</dbReference>
<dbReference type="FunCoup" id="P84075">
    <property type="interactions" value="441"/>
</dbReference>
<dbReference type="IntAct" id="P84075">
    <property type="interactions" value="1"/>
</dbReference>
<dbReference type="STRING" id="10090.ENSMUSP00000112145"/>
<dbReference type="iPTMnet" id="P84075"/>
<dbReference type="PhosphoSitePlus" id="P84075"/>
<dbReference type="SwissPalm" id="P84075"/>
<dbReference type="jPOST" id="P84075"/>
<dbReference type="PaxDb" id="10090-ENSMUSP00000112145"/>
<dbReference type="PeptideAtlas" id="P84075"/>
<dbReference type="ProteomicsDB" id="273189"/>
<dbReference type="Pumba" id="P84075"/>
<dbReference type="Antibodypedia" id="31374">
    <property type="antibodies" value="99 antibodies from 22 providers"/>
</dbReference>
<dbReference type="DNASU" id="15444"/>
<dbReference type="Ensembl" id="ENSMUST00000030572.10">
    <property type="protein sequence ID" value="ENSMUSP00000030572.4"/>
    <property type="gene ID" value="ENSMUSG00000028785.14"/>
</dbReference>
<dbReference type="Ensembl" id="ENSMUST00000095807.10">
    <property type="protein sequence ID" value="ENSMUSP00000093486.4"/>
    <property type="gene ID" value="ENSMUSG00000028785.14"/>
</dbReference>
<dbReference type="Ensembl" id="ENSMUST00000116442.9">
    <property type="protein sequence ID" value="ENSMUSP00000112143.3"/>
    <property type="gene ID" value="ENSMUSG00000028785.14"/>
</dbReference>
<dbReference type="Ensembl" id="ENSMUST00000116444.10">
    <property type="protein sequence ID" value="ENSMUSP00000112145.3"/>
    <property type="gene ID" value="ENSMUSG00000028785.14"/>
</dbReference>
<dbReference type="Ensembl" id="ENSMUST00000139450.8">
    <property type="protein sequence ID" value="ENSMUSP00000119178.3"/>
    <property type="gene ID" value="ENSMUSG00000028785.14"/>
</dbReference>
<dbReference type="Ensembl" id="ENSMUST00000164649.8">
    <property type="protein sequence ID" value="ENSMUSP00000129548.2"/>
    <property type="gene ID" value="ENSMUSG00000028785.14"/>
</dbReference>
<dbReference type="GeneID" id="15444"/>
<dbReference type="KEGG" id="mmu:15444"/>
<dbReference type="UCSC" id="uc008uwb.3">
    <property type="organism name" value="mouse"/>
</dbReference>
<dbReference type="AGR" id="MGI:1336200"/>
<dbReference type="CTD" id="3208"/>
<dbReference type="MGI" id="MGI:1336200">
    <property type="gene designation" value="Hpca"/>
</dbReference>
<dbReference type="VEuPathDB" id="HostDB:ENSMUSG00000028785"/>
<dbReference type="eggNOG" id="KOG0044">
    <property type="taxonomic scope" value="Eukaryota"/>
</dbReference>
<dbReference type="GeneTree" id="ENSGT00940000158110"/>
<dbReference type="InParanoid" id="P84075"/>
<dbReference type="OMA" id="QMYDPAR"/>
<dbReference type="OrthoDB" id="191686at2759"/>
<dbReference type="PhylomeDB" id="P84075"/>
<dbReference type="TreeFam" id="TF300009"/>
<dbReference type="BioGRID-ORCS" id="15444">
    <property type="hits" value="1 hit in 78 CRISPR screens"/>
</dbReference>
<dbReference type="CD-CODE" id="CE726F99">
    <property type="entry name" value="Postsynaptic density"/>
</dbReference>
<dbReference type="ChiTaRS" id="Hpca">
    <property type="organism name" value="mouse"/>
</dbReference>
<dbReference type="PRO" id="PR:P84075"/>
<dbReference type="Proteomes" id="UP000000589">
    <property type="component" value="Chromosome 4"/>
</dbReference>
<dbReference type="RNAct" id="P84075">
    <property type="molecule type" value="protein"/>
</dbReference>
<dbReference type="Bgee" id="ENSMUSG00000028785">
    <property type="expression patterns" value="Expressed in CA3 field of hippocampus and 114 other cell types or tissues"/>
</dbReference>
<dbReference type="ExpressionAtlas" id="P84075">
    <property type="expression patterns" value="baseline and differential"/>
</dbReference>
<dbReference type="GO" id="GO:0005737">
    <property type="term" value="C:cytoplasm"/>
    <property type="evidence" value="ECO:0000250"/>
    <property type="project" value="UniProtKB"/>
</dbReference>
<dbReference type="GO" id="GO:0005829">
    <property type="term" value="C:cytosol"/>
    <property type="evidence" value="ECO:0000250"/>
    <property type="project" value="UniProtKB"/>
</dbReference>
<dbReference type="GO" id="GO:0016020">
    <property type="term" value="C:membrane"/>
    <property type="evidence" value="ECO:0000250"/>
    <property type="project" value="UniProtKB"/>
</dbReference>
<dbReference type="GO" id="GO:0003779">
    <property type="term" value="F:actin binding"/>
    <property type="evidence" value="ECO:0000250"/>
    <property type="project" value="UniProtKB"/>
</dbReference>
<dbReference type="GO" id="GO:0005509">
    <property type="term" value="F:calcium ion binding"/>
    <property type="evidence" value="ECO:0000250"/>
    <property type="project" value="UniProtKB"/>
</dbReference>
<dbReference type="GO" id="GO:0042802">
    <property type="term" value="F:identical protein binding"/>
    <property type="evidence" value="ECO:0000250"/>
    <property type="project" value="UniProtKB"/>
</dbReference>
<dbReference type="GO" id="GO:0071277">
    <property type="term" value="P:cellular response to calcium ion"/>
    <property type="evidence" value="ECO:0000250"/>
    <property type="project" value="UniProtKB"/>
</dbReference>
<dbReference type="GO" id="GO:0048839">
    <property type="term" value="P:inner ear development"/>
    <property type="evidence" value="ECO:0000314"/>
    <property type="project" value="MGI"/>
</dbReference>
<dbReference type="GO" id="GO:1901385">
    <property type="term" value="P:regulation of voltage-gated calcium channel activity"/>
    <property type="evidence" value="ECO:0000250"/>
    <property type="project" value="UniProtKB"/>
</dbReference>
<dbReference type="CDD" id="cd00051">
    <property type="entry name" value="EFh"/>
    <property type="match status" value="2"/>
</dbReference>
<dbReference type="FunFam" id="1.10.238.10:FF:000078">
    <property type="entry name" value="Hippocalcin-like 1"/>
    <property type="match status" value="1"/>
</dbReference>
<dbReference type="FunFam" id="1.10.238.10:FF:000072">
    <property type="entry name" value="Hippocalcin-like protein 1"/>
    <property type="match status" value="1"/>
</dbReference>
<dbReference type="Gene3D" id="1.10.238.10">
    <property type="entry name" value="EF-hand"/>
    <property type="match status" value="1"/>
</dbReference>
<dbReference type="InterPro" id="IPR011992">
    <property type="entry name" value="EF-hand-dom_pair"/>
</dbReference>
<dbReference type="InterPro" id="IPR018247">
    <property type="entry name" value="EF_Hand_1_Ca_BS"/>
</dbReference>
<dbReference type="InterPro" id="IPR002048">
    <property type="entry name" value="EF_hand_dom"/>
</dbReference>
<dbReference type="InterPro" id="IPR028846">
    <property type="entry name" value="Recoverin"/>
</dbReference>
<dbReference type="PANTHER" id="PTHR23055">
    <property type="entry name" value="CALCIUM BINDING PROTEINS"/>
    <property type="match status" value="1"/>
</dbReference>
<dbReference type="PANTHER" id="PTHR23055:SF57">
    <property type="entry name" value="NEURON-SPECIFIC CALCIUM-BINDING PROTEIN HIPPOCALCIN"/>
    <property type="match status" value="1"/>
</dbReference>
<dbReference type="Pfam" id="PF00036">
    <property type="entry name" value="EF-hand_1"/>
    <property type="match status" value="1"/>
</dbReference>
<dbReference type="Pfam" id="PF13499">
    <property type="entry name" value="EF-hand_7"/>
    <property type="match status" value="1"/>
</dbReference>
<dbReference type="PRINTS" id="PR00450">
    <property type="entry name" value="RECOVERIN"/>
</dbReference>
<dbReference type="SMART" id="SM00054">
    <property type="entry name" value="EFh"/>
    <property type="match status" value="3"/>
</dbReference>
<dbReference type="SUPFAM" id="SSF47473">
    <property type="entry name" value="EF-hand"/>
    <property type="match status" value="1"/>
</dbReference>
<dbReference type="PROSITE" id="PS00018">
    <property type="entry name" value="EF_HAND_1"/>
    <property type="match status" value="3"/>
</dbReference>
<dbReference type="PROSITE" id="PS50222">
    <property type="entry name" value="EF_HAND_2"/>
    <property type="match status" value="3"/>
</dbReference>
<accession>P84075</accession>
<accession>A2A7R4</accession>
<accession>P32076</accession>
<accession>P41211</accession>
<accession>P70510</accession>
<reference key="1">
    <citation type="journal article" date="1998" name="Gene">
        <title>Genomic structure and chromosomal mapping of the human and mouse hippocalcin genes.</title>
        <authorList>
            <person name="Masaki T."/>
            <person name="Sakai E."/>
            <person name="Furuta Y."/>
            <person name="Kobayashi M."/>
            <person name="Takamatsu K."/>
        </authorList>
    </citation>
    <scope>NUCLEOTIDE SEQUENCE [GENOMIC DNA]</scope>
    <source>
        <strain>129/SvJ</strain>
    </source>
</reference>
<reference key="2">
    <citation type="journal article" date="2002" name="J. Neurosci.">
        <title>Congenic mapping of alcohol and pentobarbital withdrawal liability loci to a &lt;1 centimorgan interval of murine chromosome 4: identification of Mpdz as a candidate gene.</title>
        <authorList>
            <person name="Fehr C."/>
            <person name="Shirley R.L."/>
            <person name="Belknap J.K."/>
            <person name="Crabbe J.C."/>
            <person name="Buck K.J."/>
        </authorList>
    </citation>
    <scope>NUCLEOTIDE SEQUENCE [MRNA]</scope>
    <source>
        <strain>C57BL/6J</strain>
        <strain>DBA/2J</strain>
        <tissue>Brain</tissue>
    </source>
</reference>
<reference key="3">
    <citation type="journal article" date="2005" name="Science">
        <title>The transcriptional landscape of the mammalian genome.</title>
        <authorList>
            <person name="Carninci P."/>
            <person name="Kasukawa T."/>
            <person name="Katayama S."/>
            <person name="Gough J."/>
            <person name="Frith M.C."/>
            <person name="Maeda N."/>
            <person name="Oyama R."/>
            <person name="Ravasi T."/>
            <person name="Lenhard B."/>
            <person name="Wells C."/>
            <person name="Kodzius R."/>
            <person name="Shimokawa K."/>
            <person name="Bajic V.B."/>
            <person name="Brenner S.E."/>
            <person name="Batalov S."/>
            <person name="Forrest A.R."/>
            <person name="Zavolan M."/>
            <person name="Davis M.J."/>
            <person name="Wilming L.G."/>
            <person name="Aidinis V."/>
            <person name="Allen J.E."/>
            <person name="Ambesi-Impiombato A."/>
            <person name="Apweiler R."/>
            <person name="Aturaliya R.N."/>
            <person name="Bailey T.L."/>
            <person name="Bansal M."/>
            <person name="Baxter L."/>
            <person name="Beisel K.W."/>
            <person name="Bersano T."/>
            <person name="Bono H."/>
            <person name="Chalk A.M."/>
            <person name="Chiu K.P."/>
            <person name="Choudhary V."/>
            <person name="Christoffels A."/>
            <person name="Clutterbuck D.R."/>
            <person name="Crowe M.L."/>
            <person name="Dalla E."/>
            <person name="Dalrymple B.P."/>
            <person name="de Bono B."/>
            <person name="Della Gatta G."/>
            <person name="di Bernardo D."/>
            <person name="Down T."/>
            <person name="Engstrom P."/>
            <person name="Fagiolini M."/>
            <person name="Faulkner G."/>
            <person name="Fletcher C.F."/>
            <person name="Fukushima T."/>
            <person name="Furuno M."/>
            <person name="Futaki S."/>
            <person name="Gariboldi M."/>
            <person name="Georgii-Hemming P."/>
            <person name="Gingeras T.R."/>
            <person name="Gojobori T."/>
            <person name="Green R.E."/>
            <person name="Gustincich S."/>
            <person name="Harbers M."/>
            <person name="Hayashi Y."/>
            <person name="Hensch T.K."/>
            <person name="Hirokawa N."/>
            <person name="Hill D."/>
            <person name="Huminiecki L."/>
            <person name="Iacono M."/>
            <person name="Ikeo K."/>
            <person name="Iwama A."/>
            <person name="Ishikawa T."/>
            <person name="Jakt M."/>
            <person name="Kanapin A."/>
            <person name="Katoh M."/>
            <person name="Kawasawa Y."/>
            <person name="Kelso J."/>
            <person name="Kitamura H."/>
            <person name="Kitano H."/>
            <person name="Kollias G."/>
            <person name="Krishnan S.P."/>
            <person name="Kruger A."/>
            <person name="Kummerfeld S.K."/>
            <person name="Kurochkin I.V."/>
            <person name="Lareau L.F."/>
            <person name="Lazarevic D."/>
            <person name="Lipovich L."/>
            <person name="Liu J."/>
            <person name="Liuni S."/>
            <person name="McWilliam S."/>
            <person name="Madan Babu M."/>
            <person name="Madera M."/>
            <person name="Marchionni L."/>
            <person name="Matsuda H."/>
            <person name="Matsuzawa S."/>
            <person name="Miki H."/>
            <person name="Mignone F."/>
            <person name="Miyake S."/>
            <person name="Morris K."/>
            <person name="Mottagui-Tabar S."/>
            <person name="Mulder N."/>
            <person name="Nakano N."/>
            <person name="Nakauchi H."/>
            <person name="Ng P."/>
            <person name="Nilsson R."/>
            <person name="Nishiguchi S."/>
            <person name="Nishikawa S."/>
            <person name="Nori F."/>
            <person name="Ohara O."/>
            <person name="Okazaki Y."/>
            <person name="Orlando V."/>
            <person name="Pang K.C."/>
            <person name="Pavan W.J."/>
            <person name="Pavesi G."/>
            <person name="Pesole G."/>
            <person name="Petrovsky N."/>
            <person name="Piazza S."/>
            <person name="Reed J."/>
            <person name="Reid J.F."/>
            <person name="Ring B.Z."/>
            <person name="Ringwald M."/>
            <person name="Rost B."/>
            <person name="Ruan Y."/>
            <person name="Salzberg S.L."/>
            <person name="Sandelin A."/>
            <person name="Schneider C."/>
            <person name="Schoenbach C."/>
            <person name="Sekiguchi K."/>
            <person name="Semple C.A."/>
            <person name="Seno S."/>
            <person name="Sessa L."/>
            <person name="Sheng Y."/>
            <person name="Shibata Y."/>
            <person name="Shimada H."/>
            <person name="Shimada K."/>
            <person name="Silva D."/>
            <person name="Sinclair B."/>
            <person name="Sperling S."/>
            <person name="Stupka E."/>
            <person name="Sugiura K."/>
            <person name="Sultana R."/>
            <person name="Takenaka Y."/>
            <person name="Taki K."/>
            <person name="Tammoja K."/>
            <person name="Tan S.L."/>
            <person name="Tang S."/>
            <person name="Taylor M.S."/>
            <person name="Tegner J."/>
            <person name="Teichmann S.A."/>
            <person name="Ueda H.R."/>
            <person name="van Nimwegen E."/>
            <person name="Verardo R."/>
            <person name="Wei C.L."/>
            <person name="Yagi K."/>
            <person name="Yamanishi H."/>
            <person name="Zabarovsky E."/>
            <person name="Zhu S."/>
            <person name="Zimmer A."/>
            <person name="Hide W."/>
            <person name="Bult C."/>
            <person name="Grimmond S.M."/>
            <person name="Teasdale R.D."/>
            <person name="Liu E.T."/>
            <person name="Brusic V."/>
            <person name="Quackenbush J."/>
            <person name="Wahlestedt C."/>
            <person name="Mattick J.S."/>
            <person name="Hume D.A."/>
            <person name="Kai C."/>
            <person name="Sasaki D."/>
            <person name="Tomaru Y."/>
            <person name="Fukuda S."/>
            <person name="Kanamori-Katayama M."/>
            <person name="Suzuki M."/>
            <person name="Aoki J."/>
            <person name="Arakawa T."/>
            <person name="Iida J."/>
            <person name="Imamura K."/>
            <person name="Itoh M."/>
            <person name="Kato T."/>
            <person name="Kawaji H."/>
            <person name="Kawagashira N."/>
            <person name="Kawashima T."/>
            <person name="Kojima M."/>
            <person name="Kondo S."/>
            <person name="Konno H."/>
            <person name="Nakano K."/>
            <person name="Ninomiya N."/>
            <person name="Nishio T."/>
            <person name="Okada M."/>
            <person name="Plessy C."/>
            <person name="Shibata K."/>
            <person name="Shiraki T."/>
            <person name="Suzuki S."/>
            <person name="Tagami M."/>
            <person name="Waki K."/>
            <person name="Watahiki A."/>
            <person name="Okamura-Oho Y."/>
            <person name="Suzuki H."/>
            <person name="Kawai J."/>
            <person name="Hayashizaki Y."/>
        </authorList>
    </citation>
    <scope>NUCLEOTIDE SEQUENCE [LARGE SCALE MRNA]</scope>
    <source>
        <strain>C57BL/6J</strain>
        <tissue>Brain</tissue>
    </source>
</reference>
<reference key="4">
    <citation type="journal article" date="2009" name="PLoS Biol.">
        <title>Lineage-specific biology revealed by a finished genome assembly of the mouse.</title>
        <authorList>
            <person name="Church D.M."/>
            <person name="Goodstadt L."/>
            <person name="Hillier L.W."/>
            <person name="Zody M.C."/>
            <person name="Goldstein S."/>
            <person name="She X."/>
            <person name="Bult C.J."/>
            <person name="Agarwala R."/>
            <person name="Cherry J.L."/>
            <person name="DiCuccio M."/>
            <person name="Hlavina W."/>
            <person name="Kapustin Y."/>
            <person name="Meric P."/>
            <person name="Maglott D."/>
            <person name="Birtle Z."/>
            <person name="Marques A.C."/>
            <person name="Graves T."/>
            <person name="Zhou S."/>
            <person name="Teague B."/>
            <person name="Potamousis K."/>
            <person name="Churas C."/>
            <person name="Place M."/>
            <person name="Herschleb J."/>
            <person name="Runnheim R."/>
            <person name="Forrest D."/>
            <person name="Amos-Landgraf J."/>
            <person name="Schwartz D.C."/>
            <person name="Cheng Z."/>
            <person name="Lindblad-Toh K."/>
            <person name="Eichler E.E."/>
            <person name="Ponting C.P."/>
        </authorList>
    </citation>
    <scope>NUCLEOTIDE SEQUENCE [LARGE SCALE GENOMIC DNA]</scope>
    <source>
        <strain>C57BL/6J</strain>
    </source>
</reference>
<reference key="5">
    <citation type="journal article" date="2004" name="Genome Res.">
        <title>The status, quality, and expansion of the NIH full-length cDNA project: the Mammalian Gene Collection (MGC).</title>
        <authorList>
            <consortium name="The MGC Project Team"/>
        </authorList>
    </citation>
    <scope>NUCLEOTIDE SEQUENCE [LARGE SCALE MRNA]</scope>
    <source>
        <tissue>Brain</tissue>
        <tissue>Retina</tissue>
    </source>
</reference>
<reference key="6">
    <citation type="journal article" date="2010" name="Cell">
        <title>A tissue-specific atlas of mouse protein phosphorylation and expression.</title>
        <authorList>
            <person name="Huttlin E.L."/>
            <person name="Jedrychowski M.P."/>
            <person name="Elias J.E."/>
            <person name="Goswami T."/>
            <person name="Rad R."/>
            <person name="Beausoleil S.A."/>
            <person name="Villen J."/>
            <person name="Haas W."/>
            <person name="Sowa M.E."/>
            <person name="Gygi S.P."/>
        </authorList>
    </citation>
    <scope>IDENTIFICATION BY MASS SPECTROMETRY [LARGE SCALE ANALYSIS]</scope>
    <source>
        <tissue>Brain</tissue>
    </source>
</reference>
<sequence>MGKQNSKLRPEMLQDLRENTEFSELELQEWYKGFLKDCPTGILNVDEFKKIYANFFPYGDASKFAEHVFRTFDTNSDGTIDFREFIIALSVTSRGRLEQKLMWAFSMYDLDGNGYISREEMLEIVQAIYKMVSSVMKMPEDESTPEKRTEKIFRQMDTNNDGKLSLEEFIRGAKSDPSIVRLLQCDPSSASQF</sequence>